<evidence type="ECO:0000255" key="1">
    <source>
        <dbReference type="PROSITE-ProRule" id="PRU00711"/>
    </source>
</evidence>
<evidence type="ECO:0000269" key="2">
    <source>
    </source>
</evidence>
<evidence type="ECO:0007829" key="3">
    <source>
        <dbReference type="PDB" id="1F2G"/>
    </source>
</evidence>
<evidence type="ECO:0007829" key="4">
    <source>
        <dbReference type="PDB" id="1FXD"/>
    </source>
</evidence>
<organism>
    <name type="scientific">Megalodesulfovibrio gigas</name>
    <name type="common">Desulfovibrio gigas</name>
    <dbReference type="NCBI Taxonomy" id="879"/>
    <lineage>
        <taxon>Bacteria</taxon>
        <taxon>Pseudomonadati</taxon>
        <taxon>Thermodesulfobacteriota</taxon>
        <taxon>Desulfovibrionia</taxon>
        <taxon>Desulfovibrionales</taxon>
        <taxon>Desulfovibrionaceae</taxon>
        <taxon>Megalodesulfovibrio</taxon>
    </lineage>
</organism>
<protein>
    <recommendedName>
        <fullName>Ferredoxin-2</fullName>
    </recommendedName>
    <alternativeName>
        <fullName>Ferredoxin II</fullName>
        <shortName>FdII</shortName>
    </alternativeName>
</protein>
<proteinExistence type="evidence at protein level"/>
<accession>P00209</accession>
<reference key="1">
    <citation type="journal article" date="1979" name="Biochem. Biophys. Res. Commun.">
        <title>Amino acid sequence of Desulfovibrio gigas ferredoxin: revisions.</title>
        <authorList>
            <person name="Bruschi M."/>
        </authorList>
    </citation>
    <scope>PROTEIN SEQUENCE</scope>
</reference>
<reference key="2">
    <citation type="journal article" date="1971" name="Biochem. Biophys. Res. Commun.">
        <title>The amino acid sequence of ferredoxin from the sulfate reducing bacterium, Desulfovibrio gigas.</title>
        <authorList>
            <person name="Travis J."/>
            <person name="Newman D.J."/>
            <person name="le Gall J."/>
            <person name="Peck H.D. Jr."/>
        </authorList>
    </citation>
    <scope>PROTEIN SEQUENCE</scope>
</reference>
<reference key="3">
    <citation type="journal article" date="1989" name="FEBS Lett.">
        <title>The crystal structure of the three-iron ferredoxin II from Desulfovibrio gigas.</title>
        <authorList>
            <person name="Kissinger C.R."/>
            <person name="Adman E.T."/>
            <person name="Sieker L.C."/>
            <person name="Jensen L.H."/>
            <person name="le Gall J."/>
        </authorList>
    </citation>
    <scope>X-RAY CRYSTALLOGRAPHY (1.7 ANGSTROMS)</scope>
    <scope>SEQUENCE REVISION</scope>
    <scope>METHYLTHIOLATION AT CYS-11</scope>
    <scope>DISULFIDE BOND</scope>
</reference>
<reference key="4">
    <citation type="journal article" date="1991" name="J. Mol. Biol.">
        <title>Refined crystal structure of ferredoxin II from Desulfovibrio gigas at 1.7 A.</title>
        <authorList>
            <person name="Kissinger C.R."/>
            <person name="Sieker L.C."/>
            <person name="Adman E.T."/>
            <person name="Jensen L.H."/>
        </authorList>
    </citation>
    <scope>X-RAY CRYSTALLOGRAPHY (1.7 ANGSTROMS)</scope>
</reference>
<reference key="5">
    <citation type="journal article" date="1999" name="J. Biol. Inorg. Chem.">
        <title>The solution structure of a [3Fe-4S] ferredoxin: oxidised ferredoxin II from Desulfovibrio gigas.</title>
        <authorList>
            <person name="Goodfellow B.J."/>
            <person name="Macedo A.L."/>
            <person name="Rodrigues P."/>
            <person name="Moura I."/>
            <person name="Wray V."/>
            <person name="Moura J.J."/>
        </authorList>
    </citation>
    <scope>STRUCTURE BY NMR</scope>
</reference>
<name>FER_MEGGA</name>
<dbReference type="PIR" id="S48666">
    <property type="entry name" value="FEDVFG"/>
</dbReference>
<dbReference type="PDB" id="1F2G">
    <property type="method" value="NMR"/>
    <property type="chains" value="A=1-58"/>
</dbReference>
<dbReference type="PDB" id="1FXD">
    <property type="method" value="X-ray"/>
    <property type="resolution" value="1.70 A"/>
    <property type="chains" value="A=1-58"/>
</dbReference>
<dbReference type="PDBsum" id="1F2G"/>
<dbReference type="PDBsum" id="1FXD"/>
<dbReference type="SMR" id="P00209"/>
<dbReference type="EvolutionaryTrace" id="P00209"/>
<dbReference type="GO" id="GO:0051538">
    <property type="term" value="F:3 iron, 4 sulfur cluster binding"/>
    <property type="evidence" value="ECO:0007669"/>
    <property type="project" value="UniProtKB-KW"/>
</dbReference>
<dbReference type="GO" id="GO:0009055">
    <property type="term" value="F:electron transfer activity"/>
    <property type="evidence" value="ECO:0007669"/>
    <property type="project" value="InterPro"/>
</dbReference>
<dbReference type="GO" id="GO:0005506">
    <property type="term" value="F:iron ion binding"/>
    <property type="evidence" value="ECO:0007669"/>
    <property type="project" value="InterPro"/>
</dbReference>
<dbReference type="Gene3D" id="3.30.70.20">
    <property type="match status" value="1"/>
</dbReference>
<dbReference type="InterPro" id="IPR001080">
    <property type="entry name" value="3Fe4S_ferredoxin"/>
</dbReference>
<dbReference type="InterPro" id="IPR017896">
    <property type="entry name" value="4Fe4S_Fe-S-bd"/>
</dbReference>
<dbReference type="InterPro" id="IPR017900">
    <property type="entry name" value="4Fe4S_Fe_S_CS"/>
</dbReference>
<dbReference type="InterPro" id="IPR051269">
    <property type="entry name" value="Fe-S_cluster_ET"/>
</dbReference>
<dbReference type="PANTHER" id="PTHR36923">
    <property type="entry name" value="FERREDOXIN"/>
    <property type="match status" value="1"/>
</dbReference>
<dbReference type="PANTHER" id="PTHR36923:SF3">
    <property type="entry name" value="FERREDOXIN"/>
    <property type="match status" value="1"/>
</dbReference>
<dbReference type="Pfam" id="PF13370">
    <property type="entry name" value="Fer4_13"/>
    <property type="match status" value="1"/>
</dbReference>
<dbReference type="PRINTS" id="PR00352">
    <property type="entry name" value="3FE4SFRDOXIN"/>
</dbReference>
<dbReference type="SUPFAM" id="SSF54862">
    <property type="entry name" value="4Fe-4S ferredoxins"/>
    <property type="match status" value="1"/>
</dbReference>
<dbReference type="PROSITE" id="PS00198">
    <property type="entry name" value="4FE4S_FER_1"/>
    <property type="match status" value="1"/>
</dbReference>
<dbReference type="PROSITE" id="PS51379">
    <property type="entry name" value="4FE4S_FER_2"/>
    <property type="match status" value="2"/>
</dbReference>
<comment type="function">
    <text>Ferredoxins are iron-sulfur proteins that transfer electrons in a wide variety of metabolic reactions.</text>
</comment>
<comment type="cofactor">
    <cofactor>
        <name>[3Fe-4S] cluster</name>
        <dbReference type="ChEBI" id="CHEBI:21137"/>
    </cofactor>
    <text>Binds 1 [3Fe-4S] cluster in its tetrameric form.</text>
</comment>
<comment type="cofactor">
    <cofactor>
        <name>[4Fe-4S] cluster</name>
        <dbReference type="ChEBI" id="CHEBI:49883"/>
    </cofactor>
    <text>Binds 1 [4Fe-4S] cluster in its dimeric form.</text>
</comment>
<comment type="subunit">
    <text>Homodimer (ferredoxin I) or homotetramer (ferredoxin II).</text>
</comment>
<sequence>PIEVNDDCMACEACVEICPDVFEMNEEGDKAVVINPDSDLDCVEEAIDSCPAEAIVRS</sequence>
<feature type="chain" id="PRO_0000159195" description="Ferredoxin-2">
    <location>
        <begin position="1"/>
        <end position="58"/>
    </location>
</feature>
<feature type="domain" description="4Fe-4S ferredoxin-type 1" evidence="1">
    <location>
        <begin position="2"/>
        <end position="27"/>
    </location>
</feature>
<feature type="domain" description="4Fe-4S ferredoxin-type 2" evidence="1">
    <location>
        <begin position="30"/>
        <end position="58"/>
    </location>
</feature>
<feature type="binding site">
    <location>
        <position position="8"/>
    </location>
    <ligand>
        <name>[3Fe-4S] cluster</name>
        <dbReference type="ChEBI" id="CHEBI:21137"/>
    </ligand>
</feature>
<feature type="binding site">
    <location>
        <position position="14"/>
    </location>
    <ligand>
        <name>[3Fe-4S] cluster</name>
        <dbReference type="ChEBI" id="CHEBI:21137"/>
    </ligand>
</feature>
<feature type="binding site">
    <location>
        <position position="50"/>
    </location>
    <ligand>
        <name>[3Fe-4S] cluster</name>
        <dbReference type="ChEBI" id="CHEBI:21137"/>
    </ligand>
</feature>
<feature type="modified residue" description="Cysteine methyl disulfide" evidence="2">
    <location>
        <position position="11"/>
    </location>
</feature>
<feature type="disulfide bond" evidence="2">
    <location>
        <begin position="18"/>
        <end position="42"/>
    </location>
</feature>
<feature type="strand" evidence="4">
    <location>
        <begin position="2"/>
        <end position="4"/>
    </location>
</feature>
<feature type="turn" evidence="3">
    <location>
        <begin position="5"/>
        <end position="7"/>
    </location>
</feature>
<feature type="helix" evidence="4">
    <location>
        <begin position="13"/>
        <end position="17"/>
    </location>
</feature>
<feature type="turn" evidence="4">
    <location>
        <begin position="19"/>
        <end position="21"/>
    </location>
</feature>
<feature type="strand" evidence="4">
    <location>
        <begin position="22"/>
        <end position="24"/>
    </location>
</feature>
<feature type="strand" evidence="4">
    <location>
        <begin position="26"/>
        <end position="34"/>
    </location>
</feature>
<feature type="helix" evidence="4">
    <location>
        <begin position="41"/>
        <end position="49"/>
    </location>
</feature>
<feature type="strand" evidence="4">
    <location>
        <begin position="55"/>
        <end position="57"/>
    </location>
</feature>
<keyword id="KW-0002">3D-structure</keyword>
<keyword id="KW-0003">3Fe-4S</keyword>
<keyword id="KW-0903">Direct protein sequencing</keyword>
<keyword id="KW-1015">Disulfide bond</keyword>
<keyword id="KW-0249">Electron transport</keyword>
<keyword id="KW-0408">Iron</keyword>
<keyword id="KW-0411">Iron-sulfur</keyword>
<keyword id="KW-0479">Metal-binding</keyword>
<keyword id="KW-0488">Methylation</keyword>
<keyword id="KW-0677">Repeat</keyword>
<keyword id="KW-0813">Transport</keyword>